<organism>
    <name type="scientific">Mycosarcoma maydis</name>
    <name type="common">Corn smut fungus</name>
    <name type="synonym">Ustilago maydis</name>
    <dbReference type="NCBI Taxonomy" id="5270"/>
    <lineage>
        <taxon>Eukaryota</taxon>
        <taxon>Fungi</taxon>
        <taxon>Dikarya</taxon>
        <taxon>Basidiomycota</taxon>
        <taxon>Ustilaginomycotina</taxon>
        <taxon>Ustilaginomycetes</taxon>
        <taxon>Ustilaginales</taxon>
        <taxon>Ustilaginaceae</taxon>
        <taxon>Mycosarcoma</taxon>
    </lineage>
</organism>
<protein>
    <recommendedName>
        <fullName evidence="1">DNA damage-binding protein CMR1</fullName>
    </recommendedName>
</protein>
<name>CMR1_MYCMD</name>
<accession>Q4PGT8</accession>
<accession>A0A0D1EDI4</accession>
<reference key="1">
    <citation type="journal article" date="2006" name="Nature">
        <title>Insights from the genome of the biotrophic fungal plant pathogen Ustilago maydis.</title>
        <authorList>
            <person name="Kaemper J."/>
            <person name="Kahmann R."/>
            <person name="Boelker M."/>
            <person name="Ma L.-J."/>
            <person name="Brefort T."/>
            <person name="Saville B.J."/>
            <person name="Banuett F."/>
            <person name="Kronstad J.W."/>
            <person name="Gold S.E."/>
            <person name="Mueller O."/>
            <person name="Perlin M.H."/>
            <person name="Woesten H.A.B."/>
            <person name="de Vries R."/>
            <person name="Ruiz-Herrera J."/>
            <person name="Reynaga-Pena C.G."/>
            <person name="Snetselaar K."/>
            <person name="McCann M."/>
            <person name="Perez-Martin J."/>
            <person name="Feldbruegge M."/>
            <person name="Basse C.W."/>
            <person name="Steinberg G."/>
            <person name="Ibeas J.I."/>
            <person name="Holloman W."/>
            <person name="Guzman P."/>
            <person name="Farman M.L."/>
            <person name="Stajich J.E."/>
            <person name="Sentandreu R."/>
            <person name="Gonzalez-Prieto J.M."/>
            <person name="Kennell J.C."/>
            <person name="Molina L."/>
            <person name="Schirawski J."/>
            <person name="Mendoza-Mendoza A."/>
            <person name="Greilinger D."/>
            <person name="Muench K."/>
            <person name="Roessel N."/>
            <person name="Scherer M."/>
            <person name="Vranes M."/>
            <person name="Ladendorf O."/>
            <person name="Vincon V."/>
            <person name="Fuchs U."/>
            <person name="Sandrock B."/>
            <person name="Meng S."/>
            <person name="Ho E.C.H."/>
            <person name="Cahill M.J."/>
            <person name="Boyce K.J."/>
            <person name="Klose J."/>
            <person name="Klosterman S.J."/>
            <person name="Deelstra H.J."/>
            <person name="Ortiz-Castellanos L."/>
            <person name="Li W."/>
            <person name="Sanchez-Alonso P."/>
            <person name="Schreier P.H."/>
            <person name="Haeuser-Hahn I."/>
            <person name="Vaupel M."/>
            <person name="Koopmann E."/>
            <person name="Friedrich G."/>
            <person name="Voss H."/>
            <person name="Schlueter T."/>
            <person name="Margolis J."/>
            <person name="Platt D."/>
            <person name="Swimmer C."/>
            <person name="Gnirke A."/>
            <person name="Chen F."/>
            <person name="Vysotskaia V."/>
            <person name="Mannhaupt G."/>
            <person name="Gueldener U."/>
            <person name="Muensterkoetter M."/>
            <person name="Haase D."/>
            <person name="Oesterheld M."/>
            <person name="Mewes H.-W."/>
            <person name="Mauceli E.W."/>
            <person name="DeCaprio D."/>
            <person name="Wade C.M."/>
            <person name="Butler J."/>
            <person name="Young S.K."/>
            <person name="Jaffe D.B."/>
            <person name="Calvo S.E."/>
            <person name="Nusbaum C."/>
            <person name="Galagan J.E."/>
            <person name="Birren B.W."/>
        </authorList>
    </citation>
    <scope>NUCLEOTIDE SEQUENCE [LARGE SCALE GENOMIC DNA]</scope>
    <source>
        <strain>DSM 14603 / FGSC 9021 / UM521</strain>
    </source>
</reference>
<reference key="2">
    <citation type="submission" date="2014-09" db="EMBL/GenBank/DDBJ databases">
        <authorList>
            <person name="Gueldener U."/>
            <person name="Muensterkoetter M."/>
            <person name="Walter M.C."/>
            <person name="Mannhaupt G."/>
            <person name="Kahmann R."/>
        </authorList>
    </citation>
    <scope>GENOME REANNOTATION</scope>
    <source>
        <strain>DSM 14603 / FGSC 9021 / UM521</strain>
    </source>
</reference>
<keyword id="KW-0227">DNA damage</keyword>
<keyword id="KW-0238">DNA-binding</keyword>
<keyword id="KW-1185">Reference proteome</keyword>
<keyword id="KW-0677">Repeat</keyword>
<keyword id="KW-0853">WD repeat</keyword>
<comment type="function">
    <text evidence="1">DNA-binding protein that binds to both single- and double-stranded DNA. Binds preferentially to UV-damaged DNA. May be involved in DNA-metabolic processes.</text>
</comment>
<comment type="similarity">
    <text evidence="4">Belongs to the WD repeat DDB2/WDR76 family.</text>
</comment>
<feature type="chain" id="PRO_0000351115" description="DNA damage-binding protein CMR1">
    <location>
        <begin position="1"/>
        <end position="637"/>
    </location>
</feature>
<feature type="repeat" description="WD 1" evidence="2">
    <location>
        <begin position="185"/>
        <end position="226"/>
    </location>
</feature>
<feature type="repeat" description="WD 2" evidence="2">
    <location>
        <begin position="255"/>
        <end position="295"/>
    </location>
</feature>
<feature type="repeat" description="WD 3" evidence="2">
    <location>
        <begin position="297"/>
        <end position="321"/>
    </location>
</feature>
<feature type="repeat" description="WD 4" evidence="2">
    <location>
        <begin position="361"/>
        <end position="401"/>
    </location>
</feature>
<feature type="repeat" description="WD 5" evidence="2">
    <location>
        <begin position="431"/>
        <end position="470"/>
    </location>
</feature>
<feature type="repeat" description="WD 6" evidence="2">
    <location>
        <begin position="556"/>
        <end position="598"/>
    </location>
</feature>
<feature type="repeat" description="WD 7" evidence="2">
    <location>
        <begin position="602"/>
        <end position="637"/>
    </location>
</feature>
<feature type="region of interest" description="Disordered" evidence="3">
    <location>
        <begin position="1"/>
        <end position="91"/>
    </location>
</feature>
<feature type="region of interest" description="Disordered" evidence="3">
    <location>
        <begin position="144"/>
        <end position="168"/>
    </location>
</feature>
<feature type="region of interest" description="Disordered" evidence="3">
    <location>
        <begin position="482"/>
        <end position="508"/>
    </location>
</feature>
<feature type="region of interest" description="Disordered" evidence="3">
    <location>
        <begin position="525"/>
        <end position="549"/>
    </location>
</feature>
<feature type="compositionally biased region" description="Basic and acidic residues" evidence="3">
    <location>
        <begin position="8"/>
        <end position="23"/>
    </location>
</feature>
<feature type="compositionally biased region" description="Basic and acidic residues" evidence="3">
    <location>
        <begin position="74"/>
        <end position="91"/>
    </location>
</feature>
<dbReference type="EMBL" id="CM003140">
    <property type="protein sequence ID" value="KIS72265.1"/>
    <property type="molecule type" value="Genomic_DNA"/>
</dbReference>
<dbReference type="RefSeq" id="XP_011386478.1">
    <property type="nucleotide sequence ID" value="XM_011388176.1"/>
</dbReference>
<dbReference type="STRING" id="237631.Q4PGT8"/>
<dbReference type="EnsemblFungi" id="KIS72265">
    <property type="protein sequence ID" value="KIS72265"/>
    <property type="gene ID" value="UMAG_00675"/>
</dbReference>
<dbReference type="GeneID" id="23561911"/>
<dbReference type="KEGG" id="uma:UMAG_00675"/>
<dbReference type="VEuPathDB" id="FungiDB:UMAG_00675"/>
<dbReference type="eggNOG" id="KOG4328">
    <property type="taxonomic scope" value="Eukaryota"/>
</dbReference>
<dbReference type="HOGENOM" id="CLU_017019_1_0_1"/>
<dbReference type="InParanoid" id="Q4PGT8"/>
<dbReference type="OMA" id="DPNTLYW"/>
<dbReference type="OrthoDB" id="9890280at2759"/>
<dbReference type="Proteomes" id="UP000000561">
    <property type="component" value="Chromosome 1"/>
</dbReference>
<dbReference type="GO" id="GO:0005634">
    <property type="term" value="C:nucleus"/>
    <property type="evidence" value="ECO:0000318"/>
    <property type="project" value="GO_Central"/>
</dbReference>
<dbReference type="GO" id="GO:0003677">
    <property type="term" value="F:DNA binding"/>
    <property type="evidence" value="ECO:0000318"/>
    <property type="project" value="GO_Central"/>
</dbReference>
<dbReference type="GO" id="GO:0006974">
    <property type="term" value="P:DNA damage response"/>
    <property type="evidence" value="ECO:0007669"/>
    <property type="project" value="UniProtKB-KW"/>
</dbReference>
<dbReference type="GO" id="GO:2000001">
    <property type="term" value="P:regulation of DNA damage checkpoint"/>
    <property type="evidence" value="ECO:0000318"/>
    <property type="project" value="GO_Central"/>
</dbReference>
<dbReference type="Gene3D" id="2.130.10.10">
    <property type="entry name" value="YVTN repeat-like/Quinoprotein amine dehydrogenase"/>
    <property type="match status" value="2"/>
</dbReference>
<dbReference type="InterPro" id="IPR015943">
    <property type="entry name" value="WD40/YVTN_repeat-like_dom_sf"/>
</dbReference>
<dbReference type="InterPro" id="IPR036322">
    <property type="entry name" value="WD40_repeat_dom_sf"/>
</dbReference>
<dbReference type="InterPro" id="IPR001680">
    <property type="entry name" value="WD40_rpt"/>
</dbReference>
<dbReference type="InterPro" id="IPR050853">
    <property type="entry name" value="WD_repeat_DNA-damage-binding"/>
</dbReference>
<dbReference type="PANTHER" id="PTHR14773">
    <property type="entry name" value="WD REPEAT-CONTAINING PROTEIN 76"/>
    <property type="match status" value="1"/>
</dbReference>
<dbReference type="PANTHER" id="PTHR14773:SF0">
    <property type="entry name" value="WD REPEAT-CONTAINING PROTEIN 76"/>
    <property type="match status" value="1"/>
</dbReference>
<dbReference type="Pfam" id="PF00400">
    <property type="entry name" value="WD40"/>
    <property type="match status" value="2"/>
</dbReference>
<dbReference type="SMART" id="SM00320">
    <property type="entry name" value="WD40"/>
    <property type="match status" value="5"/>
</dbReference>
<dbReference type="SUPFAM" id="SSF50978">
    <property type="entry name" value="WD40 repeat-like"/>
    <property type="match status" value="1"/>
</dbReference>
<dbReference type="PROSITE" id="PS50082">
    <property type="entry name" value="WD_REPEATS_2"/>
    <property type="match status" value="1"/>
</dbReference>
<dbReference type="PROSITE" id="PS50294">
    <property type="entry name" value="WD_REPEATS_REGION"/>
    <property type="match status" value="1"/>
</dbReference>
<gene>
    <name type="ORF">UMAG_00675</name>
</gene>
<evidence type="ECO:0000250" key="1">
    <source>
        <dbReference type="UniProtKB" id="Q12510"/>
    </source>
</evidence>
<evidence type="ECO:0000255" key="2"/>
<evidence type="ECO:0000256" key="3">
    <source>
        <dbReference type="SAM" id="MobiDB-lite"/>
    </source>
</evidence>
<evidence type="ECO:0000305" key="4"/>
<proteinExistence type="inferred from homology"/>
<sequence length="637" mass="70283">MIESNDYEQERLKNIRENERLMKELGVMGGSSTIGGPSSKRTTPTKPKKQATPKKKPDTTPTRIMPSRSSARLAGHEADSETLKRKYEEEAEEARKVAEAAKRARHQPFDLSGMTGGELEEEAIMALESTLQGLANNTSSAAELVDTKDENKRRSANKPDPQFSTERRELEDILNKMTLKSAAKVTPKRIYSMAYHPSTDKDLVFVGDKEGSIGVWDAAPVAFASNRNGVKTADDQDEDAEERFPEGKAWTLQVHARSPVTCIKFDPVNHNSVLSSSYDSTVRKLDLATAKSEEIWAGEEDVLLSIFDVLSPSTHPSVYMDTPNPSLDERSMWIADHRGGLLHIDLRERTRRGNNTRRWQVCEKKIGAMSVNRLAPHCIATASLDQHIRLFDVRALASVVKQTADAPYNYKGVDADDLESAQTKAQFASSKARQACTSVDFSPRGDQLVGVSYDDVVKVWSMEPGSLFSEHGLKNRIATAKSNKPKGAVKKQVPDSASDTGPGLLSWLSRATPLGTKKDVAEAIKQEQDAPSPSLSKRPDDVLANPTRIPHNNQTGKWLTLFRAKWNQNALLEPHFTIGSMSRRAEVYAADGTLLRSLWDENLVTAVPAVTCMHPVLPARLVTGNASGRCTFWSPDP</sequence>